<dbReference type="EC" id="1.13.11.3"/>
<dbReference type="EMBL" id="M30791">
    <property type="protein sequence ID" value="AAA25925.1"/>
    <property type="molecule type" value="Genomic_DNA"/>
</dbReference>
<dbReference type="PIR" id="A33487">
    <property type="entry name" value="A33487"/>
</dbReference>
<dbReference type="SMR" id="P15109"/>
<dbReference type="STRING" id="292.WI67_23115"/>
<dbReference type="eggNOG" id="COG3485">
    <property type="taxonomic scope" value="Bacteria"/>
</dbReference>
<dbReference type="UniPathway" id="UPA00157">
    <property type="reaction ID" value="UER00264"/>
</dbReference>
<dbReference type="GO" id="GO:0008199">
    <property type="term" value="F:ferric iron binding"/>
    <property type="evidence" value="ECO:0007669"/>
    <property type="project" value="InterPro"/>
</dbReference>
<dbReference type="GO" id="GO:0018578">
    <property type="term" value="F:protocatechuate 3,4-dioxygenase activity"/>
    <property type="evidence" value="ECO:0007669"/>
    <property type="project" value="UniProtKB-EC"/>
</dbReference>
<dbReference type="GO" id="GO:0042952">
    <property type="term" value="P:beta-ketoadipate pathway"/>
    <property type="evidence" value="ECO:0007669"/>
    <property type="project" value="UniProtKB-UniPathway"/>
</dbReference>
<dbReference type="Gene3D" id="2.60.130.10">
    <property type="entry name" value="Aromatic compound dioxygenase"/>
    <property type="match status" value="1"/>
</dbReference>
<dbReference type="InterPro" id="IPR000627">
    <property type="entry name" value="Intradiol_dOase_C"/>
</dbReference>
<dbReference type="InterPro" id="IPR015889">
    <property type="entry name" value="Intradiol_dOase_core"/>
</dbReference>
<dbReference type="InterPro" id="IPR050770">
    <property type="entry name" value="Intradiol_RC_Dioxygenase"/>
</dbReference>
<dbReference type="InterPro" id="IPR012786">
    <property type="entry name" value="Protocat_dOase_a"/>
</dbReference>
<dbReference type="NCBIfam" id="TIGR02423">
    <property type="entry name" value="protocat_alph"/>
    <property type="match status" value="1"/>
</dbReference>
<dbReference type="PANTHER" id="PTHR33711">
    <property type="entry name" value="DIOXYGENASE, PUTATIVE (AFU_ORTHOLOGUE AFUA_2G02910)-RELATED"/>
    <property type="match status" value="1"/>
</dbReference>
<dbReference type="PANTHER" id="PTHR33711:SF9">
    <property type="entry name" value="PROTOCATECHUATE 3,4-DIOXYGENASE ALPHA CHAIN"/>
    <property type="match status" value="1"/>
</dbReference>
<dbReference type="Pfam" id="PF00775">
    <property type="entry name" value="Dioxygenase_C"/>
    <property type="match status" value="1"/>
</dbReference>
<dbReference type="SUPFAM" id="SSF49482">
    <property type="entry name" value="Aromatic compound dioxygenase"/>
    <property type="match status" value="1"/>
</dbReference>
<dbReference type="PROSITE" id="PS00083">
    <property type="entry name" value="INTRADIOL_DIOXYGENAS"/>
    <property type="match status" value="1"/>
</dbReference>
<keyword id="KW-0058">Aromatic hydrocarbons catabolism</keyword>
<keyword id="KW-0223">Dioxygenase</keyword>
<keyword id="KW-0408">Iron</keyword>
<keyword id="KW-0560">Oxidoreductase</keyword>
<name>PCXA_BURCE</name>
<accession>P15109</accession>
<comment type="function">
    <text>Plays an essential role in the utilization of numerous aromatic and hydroaromatic compounds via the beta-ketoadipate pathway.</text>
</comment>
<comment type="catalytic activity">
    <reaction>
        <text>3,4-dihydroxybenzoate + O2 = 3-carboxy-cis,cis-muconate + 2 H(+)</text>
        <dbReference type="Rhea" id="RHEA:10084"/>
        <dbReference type="ChEBI" id="CHEBI:15378"/>
        <dbReference type="ChEBI" id="CHEBI:15379"/>
        <dbReference type="ChEBI" id="CHEBI:36241"/>
        <dbReference type="ChEBI" id="CHEBI:57496"/>
        <dbReference type="EC" id="1.13.11.3"/>
    </reaction>
</comment>
<comment type="cofactor">
    <cofactor>
        <name>Fe(3+)</name>
        <dbReference type="ChEBI" id="CHEBI:29034"/>
    </cofactor>
    <text>Binds Fe(3+) ion per subunit.</text>
</comment>
<comment type="pathway">
    <text>Aromatic compound metabolism; beta-ketoadipate pathway; 3-carboxy-cis,cis-muconate from 3,4-dihydroxybenzoate: step 1/1.</text>
</comment>
<comment type="subunit">
    <text>The enzyme is an oligomer of 12 copies of the alpha and beta chains.</text>
</comment>
<comment type="similarity">
    <text evidence="2">Belongs to the intradiol ring-cleavage dioxygenase family.</text>
</comment>
<reference key="1">
    <citation type="journal article" date="1989" name="J. Bacteriol.">
        <title>Genetic organization and sequence of the Pseudomonas cepacia genes for the alpha and beta subunits of protocatechuate 3,4-dioxygenase.</title>
        <authorList>
            <person name="Zylstra G.J."/>
            <person name="Olsen R.H."/>
            <person name="Ballou D.P."/>
        </authorList>
    </citation>
    <scope>NUCLEOTIDE SEQUENCE [GENOMIC DNA]</scope>
</reference>
<protein>
    <recommendedName>
        <fullName>Protocatechuate 3,4-dioxygenase alpha chain</fullName>
        <ecNumber>1.13.11.3</ecNumber>
    </recommendedName>
    <alternativeName>
        <fullName>3,4-PCD</fullName>
    </alternativeName>
</protein>
<gene>
    <name type="primary">pcaG</name>
</gene>
<organism>
    <name type="scientific">Burkholderia cepacia</name>
    <name type="common">Pseudomonas cepacia</name>
    <dbReference type="NCBI Taxonomy" id="292"/>
    <lineage>
        <taxon>Bacteria</taxon>
        <taxon>Pseudomonadati</taxon>
        <taxon>Pseudomonadota</taxon>
        <taxon>Betaproteobacteria</taxon>
        <taxon>Burkholderiales</taxon>
        <taxon>Burkholderiaceae</taxon>
        <taxon>Burkholderia</taxon>
        <taxon>Burkholderia cepacia complex</taxon>
    </lineage>
</organism>
<proteinExistence type="inferred from homology"/>
<sequence>MTTLKQTPSQTVGPYFAYGLCPQQYGYDLKSLFTPTIAAPHADGEHVLLVGQVFDGDGNVVSDAMLEFTQVDGAGRFPASRDDVAKSGFTGFARVGTGTDAQHRFVVETVKPGRIAADEAPHINVTVMMRGILTHAFTRVYFDDEAAANAADPVLNLVPAERRATLVAKRDAQPGRPVVYRFDVRMQGPDETVFFDV</sequence>
<feature type="chain" id="PRO_0000085096" description="Protocatechuate 3,4-dioxygenase alpha chain">
    <location>
        <begin position="1"/>
        <end position="197"/>
    </location>
</feature>
<feature type="binding site" evidence="1">
    <location>
        <position position="130"/>
    </location>
    <ligand>
        <name>3,4-dihydroxybenzoate</name>
        <dbReference type="ChEBI" id="CHEBI:36241"/>
    </ligand>
</feature>
<evidence type="ECO:0000255" key="1"/>
<evidence type="ECO:0000305" key="2"/>